<keyword id="KW-0997">Cell inner membrane</keyword>
<keyword id="KW-1003">Cell membrane</keyword>
<keyword id="KW-0406">Ion transport</keyword>
<keyword id="KW-0408">Iron</keyword>
<keyword id="KW-0410">Iron transport</keyword>
<keyword id="KW-0472">Membrane</keyword>
<keyword id="KW-0479">Metal-binding</keyword>
<keyword id="KW-0812">Transmembrane</keyword>
<keyword id="KW-1133">Transmembrane helix</keyword>
<keyword id="KW-0813">Transport</keyword>
<keyword id="KW-0862">Zinc</keyword>
<keyword id="KW-0864">Zinc transport</keyword>
<gene>
    <name evidence="1" type="primary">fieF</name>
    <name type="ordered locus">STY3810</name>
    <name type="ordered locus">t3558</name>
</gene>
<organism>
    <name type="scientific">Salmonella typhi</name>
    <dbReference type="NCBI Taxonomy" id="90370"/>
    <lineage>
        <taxon>Bacteria</taxon>
        <taxon>Pseudomonadati</taxon>
        <taxon>Pseudomonadota</taxon>
        <taxon>Gammaproteobacteria</taxon>
        <taxon>Enterobacterales</taxon>
        <taxon>Enterobacteriaceae</taxon>
        <taxon>Salmonella</taxon>
    </lineage>
</organism>
<protein>
    <recommendedName>
        <fullName evidence="1">Cation-efflux pump FieF</fullName>
    </recommendedName>
</protein>
<comment type="function">
    <text evidence="1">Divalent metal cation transporter which exports Zn(2+), Cd(2+) and possibly Fe(2+). May be involved in zinc and iron detoxification by efflux.</text>
</comment>
<comment type="catalytic activity">
    <reaction evidence="1">
        <text>Zn(2+)(in) + H(+)(out) = Zn(2+)(out) + H(+)(in)</text>
        <dbReference type="Rhea" id="RHEA:28839"/>
        <dbReference type="ChEBI" id="CHEBI:15378"/>
        <dbReference type="ChEBI" id="CHEBI:29105"/>
    </reaction>
</comment>
<comment type="catalytic activity">
    <reaction evidence="1">
        <text>Cd(2+)(in) + H(+)(out) = Cd(2+)(out) + H(+)(in)</text>
        <dbReference type="Rhea" id="RHEA:28739"/>
        <dbReference type="ChEBI" id="CHEBI:15378"/>
        <dbReference type="ChEBI" id="CHEBI:48775"/>
    </reaction>
</comment>
<comment type="catalytic activity">
    <reaction evidence="1">
        <text>Fe(2+)(in) + H(+)(out) = Fe(2+)(out) + H(+)(in)</text>
        <dbReference type="Rhea" id="RHEA:29439"/>
        <dbReference type="ChEBI" id="CHEBI:15378"/>
        <dbReference type="ChEBI" id="CHEBI:29033"/>
    </reaction>
</comment>
<comment type="subunit">
    <text evidence="1">Homodimer.</text>
</comment>
<comment type="subcellular location">
    <subcellularLocation>
        <location evidence="1">Cell inner membrane</location>
        <topology evidence="1">Multi-pass membrane protein</topology>
    </subcellularLocation>
</comment>
<comment type="similarity">
    <text evidence="1 2">Belongs to the cation diffusion facilitator (CDF) transporter (TC 2.A.4) family. FieF subfamily.</text>
</comment>
<evidence type="ECO:0000255" key="1">
    <source>
        <dbReference type="HAMAP-Rule" id="MF_01425"/>
    </source>
</evidence>
<evidence type="ECO:0000305" key="2"/>
<feature type="chain" id="PRO_0000206130" description="Cation-efflux pump FieF">
    <location>
        <begin position="1"/>
        <end position="298"/>
    </location>
</feature>
<feature type="transmembrane region" description="Helical" evidence="1">
    <location>
        <begin position="24"/>
        <end position="44"/>
    </location>
</feature>
<feature type="transmembrane region" description="Helical" evidence="1">
    <location>
        <begin position="80"/>
        <end position="100"/>
    </location>
</feature>
<feature type="transmembrane region" description="Helical" evidence="1">
    <location>
        <begin position="112"/>
        <end position="132"/>
    </location>
</feature>
<feature type="transmembrane region" description="Helical" evidence="1">
    <location>
        <begin position="154"/>
        <end position="174"/>
    </location>
</feature>
<feature type="transmembrane region" description="Helical" evidence="1">
    <location>
        <begin position="176"/>
        <end position="196"/>
    </location>
</feature>
<feature type="binding site" evidence="1">
    <location>
        <position position="45"/>
    </location>
    <ligand>
        <name>Zn(2+)</name>
        <dbReference type="ChEBI" id="CHEBI:29105"/>
    </ligand>
</feature>
<feature type="binding site" evidence="1">
    <location>
        <position position="49"/>
    </location>
    <ligand>
        <name>Zn(2+)</name>
        <dbReference type="ChEBI" id="CHEBI:29105"/>
    </ligand>
</feature>
<feature type="binding site" evidence="1">
    <location>
        <position position="151"/>
    </location>
    <ligand>
        <name>Zn(2+)</name>
        <dbReference type="ChEBI" id="CHEBI:29105"/>
    </ligand>
</feature>
<feature type="binding site" evidence="1">
    <location>
        <position position="155"/>
    </location>
    <ligand>
        <name>Zn(2+)</name>
        <dbReference type="ChEBI" id="CHEBI:29105"/>
    </ligand>
</feature>
<proteinExistence type="inferred from homology"/>
<sequence length="298" mass="32742">MNQTYGRLVSRAAIAATAMASALLLIKIFAWWYTGSVSILAALVDSLVDIAASLTNLLVVRYSLQPADDEHTFGHGKAESLAALAQSMFISGSALFLTSIQNLIKPTPMNDPGVGIGVTVIALICTIILVTFQRWVVRKTQSQAVRADMLHYQSDVMMNGAILIALGLSWYGWHRADALFALGIGIYILYSALRMGYEAVQSLLDRALPDAERQEIIDIVTSWPGVSGAHDLRTRQSGPTRFIQIHLEMEDNLPLVQAHFVADQVEQAILRRFPGSDVIIHQDPCSVVPREGRKFELV</sequence>
<reference key="1">
    <citation type="journal article" date="2001" name="Nature">
        <title>Complete genome sequence of a multiple drug resistant Salmonella enterica serovar Typhi CT18.</title>
        <authorList>
            <person name="Parkhill J."/>
            <person name="Dougan G."/>
            <person name="James K.D."/>
            <person name="Thomson N.R."/>
            <person name="Pickard D."/>
            <person name="Wain J."/>
            <person name="Churcher C.M."/>
            <person name="Mungall K.L."/>
            <person name="Bentley S.D."/>
            <person name="Holden M.T.G."/>
            <person name="Sebaihia M."/>
            <person name="Baker S."/>
            <person name="Basham D."/>
            <person name="Brooks K."/>
            <person name="Chillingworth T."/>
            <person name="Connerton P."/>
            <person name="Cronin A."/>
            <person name="Davis P."/>
            <person name="Davies R.M."/>
            <person name="Dowd L."/>
            <person name="White N."/>
            <person name="Farrar J."/>
            <person name="Feltwell T."/>
            <person name="Hamlin N."/>
            <person name="Haque A."/>
            <person name="Hien T.T."/>
            <person name="Holroyd S."/>
            <person name="Jagels K."/>
            <person name="Krogh A."/>
            <person name="Larsen T.S."/>
            <person name="Leather S."/>
            <person name="Moule S."/>
            <person name="O'Gaora P."/>
            <person name="Parry C."/>
            <person name="Quail M.A."/>
            <person name="Rutherford K.M."/>
            <person name="Simmonds M."/>
            <person name="Skelton J."/>
            <person name="Stevens K."/>
            <person name="Whitehead S."/>
            <person name="Barrell B.G."/>
        </authorList>
    </citation>
    <scope>NUCLEOTIDE SEQUENCE [LARGE SCALE GENOMIC DNA]</scope>
    <source>
        <strain>CT18</strain>
    </source>
</reference>
<reference key="2">
    <citation type="journal article" date="2003" name="J. Bacteriol.">
        <title>Comparative genomics of Salmonella enterica serovar Typhi strains Ty2 and CT18.</title>
        <authorList>
            <person name="Deng W."/>
            <person name="Liou S.-R."/>
            <person name="Plunkett G. III"/>
            <person name="Mayhew G.F."/>
            <person name="Rose D.J."/>
            <person name="Burland V."/>
            <person name="Kodoyianni V."/>
            <person name="Schwartz D.C."/>
            <person name="Blattner F.R."/>
        </authorList>
    </citation>
    <scope>NUCLEOTIDE SEQUENCE [LARGE SCALE GENOMIC DNA]</scope>
    <source>
        <strain>ATCC 700931 / Ty2</strain>
    </source>
</reference>
<name>FIEF_SALTI</name>
<accession>Q8Z2W4</accession>
<accession>Q7C688</accession>
<dbReference type="EMBL" id="AL513382">
    <property type="protein sequence ID" value="CAD09563.1"/>
    <property type="molecule type" value="Genomic_DNA"/>
</dbReference>
<dbReference type="EMBL" id="AE014613">
    <property type="protein sequence ID" value="AAO71063.1"/>
    <property type="molecule type" value="Genomic_DNA"/>
</dbReference>
<dbReference type="RefSeq" id="NP_457990.1">
    <property type="nucleotide sequence ID" value="NC_003198.1"/>
</dbReference>
<dbReference type="RefSeq" id="WP_001077323.1">
    <property type="nucleotide sequence ID" value="NZ_WSUR01000010.1"/>
</dbReference>
<dbReference type="SMR" id="Q8Z2W4"/>
<dbReference type="STRING" id="220341.gene:17587674"/>
<dbReference type="KEGG" id="stt:t3558"/>
<dbReference type="KEGG" id="sty:STY3810"/>
<dbReference type="PATRIC" id="fig|220341.7.peg.3889"/>
<dbReference type="eggNOG" id="COG0053">
    <property type="taxonomic scope" value="Bacteria"/>
</dbReference>
<dbReference type="HOGENOM" id="CLU_013430_3_0_6"/>
<dbReference type="OMA" id="HDYGPGR"/>
<dbReference type="OrthoDB" id="9806522at2"/>
<dbReference type="Proteomes" id="UP000000541">
    <property type="component" value="Chromosome"/>
</dbReference>
<dbReference type="Proteomes" id="UP000002670">
    <property type="component" value="Chromosome"/>
</dbReference>
<dbReference type="GO" id="GO:0005886">
    <property type="term" value="C:plasma membrane"/>
    <property type="evidence" value="ECO:0007669"/>
    <property type="project" value="UniProtKB-SubCell"/>
</dbReference>
<dbReference type="GO" id="GO:0015086">
    <property type="term" value="F:cadmium ion transmembrane transporter activity"/>
    <property type="evidence" value="ECO:0007669"/>
    <property type="project" value="UniProtKB-UniRule"/>
</dbReference>
<dbReference type="GO" id="GO:0015093">
    <property type="term" value="F:ferrous iron transmembrane transporter activity"/>
    <property type="evidence" value="ECO:0007669"/>
    <property type="project" value="TreeGrafter"/>
</dbReference>
<dbReference type="GO" id="GO:0046872">
    <property type="term" value="F:metal ion binding"/>
    <property type="evidence" value="ECO:0007669"/>
    <property type="project" value="UniProtKB-KW"/>
</dbReference>
<dbReference type="GO" id="GO:0015341">
    <property type="term" value="F:zinc efflux antiporter activity"/>
    <property type="evidence" value="ECO:0007669"/>
    <property type="project" value="TreeGrafter"/>
</dbReference>
<dbReference type="GO" id="GO:0006882">
    <property type="term" value="P:intracellular zinc ion homeostasis"/>
    <property type="evidence" value="ECO:0007669"/>
    <property type="project" value="TreeGrafter"/>
</dbReference>
<dbReference type="FunFam" id="1.20.1510.10:FF:000001">
    <property type="entry name" value="Ferrous-iron efflux pump FieF"/>
    <property type="match status" value="1"/>
</dbReference>
<dbReference type="FunFam" id="3.30.70.1350:FF:000002">
    <property type="entry name" value="Ferrous-iron efflux pump FieF"/>
    <property type="match status" value="1"/>
</dbReference>
<dbReference type="Gene3D" id="1.20.1510.10">
    <property type="entry name" value="Cation efflux protein transmembrane domain"/>
    <property type="match status" value="1"/>
</dbReference>
<dbReference type="Gene3D" id="3.30.70.1350">
    <property type="entry name" value="Cation efflux protein, cytoplasmic domain"/>
    <property type="match status" value="1"/>
</dbReference>
<dbReference type="HAMAP" id="MF_01425">
    <property type="entry name" value="Cation_efflux_FieF"/>
    <property type="match status" value="1"/>
</dbReference>
<dbReference type="InterPro" id="IPR002524">
    <property type="entry name" value="Cation_efflux"/>
</dbReference>
<dbReference type="InterPro" id="IPR027470">
    <property type="entry name" value="Cation_efflux_CTD"/>
</dbReference>
<dbReference type="InterPro" id="IPR036837">
    <property type="entry name" value="Cation_efflux_CTD_sf"/>
</dbReference>
<dbReference type="InterPro" id="IPR023783">
    <property type="entry name" value="Cation_efflux_FieF"/>
</dbReference>
<dbReference type="InterPro" id="IPR027469">
    <property type="entry name" value="Cation_efflux_TMD_sf"/>
</dbReference>
<dbReference type="InterPro" id="IPR050291">
    <property type="entry name" value="CDF_Transporter"/>
</dbReference>
<dbReference type="NCBIfam" id="TIGR01297">
    <property type="entry name" value="CDF"/>
    <property type="match status" value="1"/>
</dbReference>
<dbReference type="NCBIfam" id="NF007064">
    <property type="entry name" value="PRK09509.1"/>
    <property type="match status" value="1"/>
</dbReference>
<dbReference type="PANTHER" id="PTHR43840:SF41">
    <property type="entry name" value="CATION-EFFLUX PUMP FIEF"/>
    <property type="match status" value="1"/>
</dbReference>
<dbReference type="PANTHER" id="PTHR43840">
    <property type="entry name" value="MITOCHONDRIAL METAL TRANSPORTER 1-RELATED"/>
    <property type="match status" value="1"/>
</dbReference>
<dbReference type="Pfam" id="PF01545">
    <property type="entry name" value="Cation_efflux"/>
    <property type="match status" value="1"/>
</dbReference>
<dbReference type="Pfam" id="PF16916">
    <property type="entry name" value="ZT_dimer"/>
    <property type="match status" value="1"/>
</dbReference>
<dbReference type="SUPFAM" id="SSF160240">
    <property type="entry name" value="Cation efflux protein cytoplasmic domain-like"/>
    <property type="match status" value="1"/>
</dbReference>
<dbReference type="SUPFAM" id="SSF161111">
    <property type="entry name" value="Cation efflux protein transmembrane domain-like"/>
    <property type="match status" value="1"/>
</dbReference>